<evidence type="ECO:0000255" key="1">
    <source>
        <dbReference type="HAMAP-Rule" id="MF_01077"/>
    </source>
</evidence>
<organism>
    <name type="scientific">Streptococcus pneumoniae (strain ATCC 700669 / Spain 23F-1)</name>
    <dbReference type="NCBI Taxonomy" id="561276"/>
    <lineage>
        <taxon>Bacteria</taxon>
        <taxon>Bacillati</taxon>
        <taxon>Bacillota</taxon>
        <taxon>Bacilli</taxon>
        <taxon>Lactobacillales</taxon>
        <taxon>Streptococcaceae</taxon>
        <taxon>Streptococcus</taxon>
    </lineage>
</organism>
<keyword id="KW-0963">Cytoplasm</keyword>
<keyword id="KW-0690">Ribosome biogenesis</keyword>
<comment type="function">
    <text evidence="1">Required for maturation of 30S ribosomal subunits.</text>
</comment>
<comment type="subcellular location">
    <subcellularLocation>
        <location evidence="1">Cytoplasm</location>
    </subcellularLocation>
</comment>
<comment type="similarity">
    <text evidence="1">Belongs to the RimP family.</text>
</comment>
<gene>
    <name evidence="1" type="primary">rimP</name>
    <name type="ordered locus">SPN23F04980</name>
</gene>
<dbReference type="EMBL" id="FM211187">
    <property type="protein sequence ID" value="CAR68348.1"/>
    <property type="molecule type" value="Genomic_DNA"/>
</dbReference>
<dbReference type="RefSeq" id="WP_001808691.1">
    <property type="nucleotide sequence ID" value="NC_011900.1"/>
</dbReference>
<dbReference type="SMR" id="B8ZM89"/>
<dbReference type="GeneID" id="93738453"/>
<dbReference type="KEGG" id="sne:SPN23F04980"/>
<dbReference type="HOGENOM" id="CLU_070525_2_0_9"/>
<dbReference type="GO" id="GO:0005829">
    <property type="term" value="C:cytosol"/>
    <property type="evidence" value="ECO:0007669"/>
    <property type="project" value="TreeGrafter"/>
</dbReference>
<dbReference type="GO" id="GO:0000028">
    <property type="term" value="P:ribosomal small subunit assembly"/>
    <property type="evidence" value="ECO:0007669"/>
    <property type="project" value="TreeGrafter"/>
</dbReference>
<dbReference type="GO" id="GO:0006412">
    <property type="term" value="P:translation"/>
    <property type="evidence" value="ECO:0007669"/>
    <property type="project" value="TreeGrafter"/>
</dbReference>
<dbReference type="CDD" id="cd01734">
    <property type="entry name" value="YlxS_C"/>
    <property type="match status" value="1"/>
</dbReference>
<dbReference type="Gene3D" id="2.30.30.180">
    <property type="entry name" value="Ribosome maturation factor RimP, C-terminal domain"/>
    <property type="match status" value="1"/>
</dbReference>
<dbReference type="Gene3D" id="3.30.300.70">
    <property type="entry name" value="RimP-like superfamily, N-terminal"/>
    <property type="match status" value="1"/>
</dbReference>
<dbReference type="HAMAP" id="MF_01077">
    <property type="entry name" value="RimP"/>
    <property type="match status" value="1"/>
</dbReference>
<dbReference type="InterPro" id="IPR003728">
    <property type="entry name" value="Ribosome_maturation_RimP"/>
</dbReference>
<dbReference type="InterPro" id="IPR028998">
    <property type="entry name" value="RimP_C"/>
</dbReference>
<dbReference type="InterPro" id="IPR036847">
    <property type="entry name" value="RimP_C_sf"/>
</dbReference>
<dbReference type="InterPro" id="IPR028989">
    <property type="entry name" value="RimP_N"/>
</dbReference>
<dbReference type="InterPro" id="IPR035956">
    <property type="entry name" value="RimP_N_sf"/>
</dbReference>
<dbReference type="NCBIfam" id="NF000928">
    <property type="entry name" value="PRK00092.1-2"/>
    <property type="match status" value="1"/>
</dbReference>
<dbReference type="PANTHER" id="PTHR33867">
    <property type="entry name" value="RIBOSOME MATURATION FACTOR RIMP"/>
    <property type="match status" value="1"/>
</dbReference>
<dbReference type="PANTHER" id="PTHR33867:SF1">
    <property type="entry name" value="RIBOSOME MATURATION FACTOR RIMP"/>
    <property type="match status" value="1"/>
</dbReference>
<dbReference type="Pfam" id="PF17384">
    <property type="entry name" value="DUF150_C"/>
    <property type="match status" value="1"/>
</dbReference>
<dbReference type="Pfam" id="PF02576">
    <property type="entry name" value="RimP_N"/>
    <property type="match status" value="1"/>
</dbReference>
<dbReference type="SUPFAM" id="SSF74942">
    <property type="entry name" value="YhbC-like, C-terminal domain"/>
    <property type="match status" value="1"/>
</dbReference>
<dbReference type="SUPFAM" id="SSF75420">
    <property type="entry name" value="YhbC-like, N-terminal domain"/>
    <property type="match status" value="1"/>
</dbReference>
<reference key="1">
    <citation type="journal article" date="2009" name="J. Bacteriol.">
        <title>Role of conjugative elements in the evolution of the multidrug-resistant pandemic clone Streptococcus pneumoniae Spain23F ST81.</title>
        <authorList>
            <person name="Croucher N.J."/>
            <person name="Walker D."/>
            <person name="Romero P."/>
            <person name="Lennard N."/>
            <person name="Paterson G.K."/>
            <person name="Bason N.C."/>
            <person name="Mitchell A.M."/>
            <person name="Quail M.A."/>
            <person name="Andrew P.W."/>
            <person name="Parkhill J."/>
            <person name="Bentley S.D."/>
            <person name="Mitchell T.J."/>
        </authorList>
    </citation>
    <scope>NUCLEOTIDE SEQUENCE [LARGE SCALE GENOMIC DNA]</scope>
    <source>
        <strain>ATCC 700669 / Spain 23F-1</strain>
    </source>
</reference>
<name>RIMP_STRPJ</name>
<sequence length="159" mass="17746">MDAIATIVELVREVVEPVIEAPFELVDIEYGKIGSDMILSIFVDKPEGITLNDTADLTEIISPVLDTIKPDPFPEQYFLEITSPGLERPLKTKDAVAGAVGKYIHVGLYQAIDKQKVFEGTLLAFEEDELTMEYMDKTRKKTVQIPYSLVSKARLAVKL</sequence>
<protein>
    <recommendedName>
        <fullName evidence="1">Ribosome maturation factor RimP</fullName>
    </recommendedName>
</protein>
<proteinExistence type="inferred from homology"/>
<accession>B8ZM89</accession>
<feature type="chain" id="PRO_1000149806" description="Ribosome maturation factor RimP">
    <location>
        <begin position="1"/>
        <end position="159"/>
    </location>
</feature>